<comment type="function">
    <text evidence="1">Catalyzes the reductive methylation of 2'-deoxyuridine-5'-monophosphate (dUMP) to 2'-deoxythymidine-5'-monophosphate (dTMP) while utilizing 5,10-methylenetetrahydrofolate (mTHF) as the methyl donor and reductant in the reaction, yielding dihydrofolate (DHF) as a by-product. This enzymatic reaction provides an intracellular de novo source of dTMP, an essential precursor for DNA biosynthesis.</text>
</comment>
<comment type="catalytic activity">
    <reaction evidence="1">
        <text>dUMP + (6R)-5,10-methylene-5,6,7,8-tetrahydrofolate = 7,8-dihydrofolate + dTMP</text>
        <dbReference type="Rhea" id="RHEA:12104"/>
        <dbReference type="ChEBI" id="CHEBI:15636"/>
        <dbReference type="ChEBI" id="CHEBI:57451"/>
        <dbReference type="ChEBI" id="CHEBI:63528"/>
        <dbReference type="ChEBI" id="CHEBI:246422"/>
        <dbReference type="EC" id="2.1.1.45"/>
    </reaction>
</comment>
<comment type="pathway">
    <text evidence="1">Pyrimidine metabolism; dTTP biosynthesis.</text>
</comment>
<comment type="subunit">
    <text evidence="1">Homodimer.</text>
</comment>
<comment type="subcellular location">
    <subcellularLocation>
        <location evidence="1">Cytoplasm</location>
    </subcellularLocation>
</comment>
<comment type="similarity">
    <text evidence="1">Belongs to the thymidylate synthase family. Bacterial-type ThyA subfamily.</text>
</comment>
<keyword id="KW-0963">Cytoplasm</keyword>
<keyword id="KW-0489">Methyltransferase</keyword>
<keyword id="KW-0545">Nucleotide biosynthesis</keyword>
<keyword id="KW-0808">Transferase</keyword>
<organism>
    <name type="scientific">Vibrio parahaemolyticus serotype O3:K6 (strain RIMD 2210633)</name>
    <dbReference type="NCBI Taxonomy" id="223926"/>
    <lineage>
        <taxon>Bacteria</taxon>
        <taxon>Pseudomonadati</taxon>
        <taxon>Pseudomonadota</taxon>
        <taxon>Gammaproteobacteria</taxon>
        <taxon>Vibrionales</taxon>
        <taxon>Vibrionaceae</taxon>
        <taxon>Vibrio</taxon>
    </lineage>
</organism>
<proteinExistence type="inferred from homology"/>
<gene>
    <name evidence="1" type="primary">thyA</name>
    <name type="ordered locus">VP0524</name>
</gene>
<dbReference type="EC" id="2.1.1.45" evidence="1"/>
<dbReference type="EMBL" id="BA000031">
    <property type="protein sequence ID" value="BAC58787.1"/>
    <property type="molecule type" value="Genomic_DNA"/>
</dbReference>
<dbReference type="RefSeq" id="NP_796903.1">
    <property type="nucleotide sequence ID" value="NC_004603.1"/>
</dbReference>
<dbReference type="RefSeq" id="WP_005481388.1">
    <property type="nucleotide sequence ID" value="NC_004603.1"/>
</dbReference>
<dbReference type="SMR" id="Q87SA0"/>
<dbReference type="GeneID" id="1187992"/>
<dbReference type="KEGG" id="vpa:VP0524"/>
<dbReference type="PATRIC" id="fig|223926.6.peg.499"/>
<dbReference type="eggNOG" id="COG0207">
    <property type="taxonomic scope" value="Bacteria"/>
</dbReference>
<dbReference type="HOGENOM" id="CLU_021669_0_1_6"/>
<dbReference type="UniPathway" id="UPA00575"/>
<dbReference type="Proteomes" id="UP000002493">
    <property type="component" value="Chromosome 1"/>
</dbReference>
<dbReference type="GO" id="GO:0005829">
    <property type="term" value="C:cytosol"/>
    <property type="evidence" value="ECO:0007669"/>
    <property type="project" value="TreeGrafter"/>
</dbReference>
<dbReference type="GO" id="GO:0004799">
    <property type="term" value="F:thymidylate synthase activity"/>
    <property type="evidence" value="ECO:0007669"/>
    <property type="project" value="UniProtKB-UniRule"/>
</dbReference>
<dbReference type="GO" id="GO:0006231">
    <property type="term" value="P:dTMP biosynthetic process"/>
    <property type="evidence" value="ECO:0007669"/>
    <property type="project" value="UniProtKB-UniRule"/>
</dbReference>
<dbReference type="GO" id="GO:0006235">
    <property type="term" value="P:dTTP biosynthetic process"/>
    <property type="evidence" value="ECO:0007669"/>
    <property type="project" value="UniProtKB-UniRule"/>
</dbReference>
<dbReference type="GO" id="GO:0032259">
    <property type="term" value="P:methylation"/>
    <property type="evidence" value="ECO:0007669"/>
    <property type="project" value="UniProtKB-KW"/>
</dbReference>
<dbReference type="CDD" id="cd00351">
    <property type="entry name" value="TS_Pyrimidine_HMase"/>
    <property type="match status" value="1"/>
</dbReference>
<dbReference type="FunFam" id="3.30.572.10:FF:000003">
    <property type="entry name" value="Thymidylate synthase"/>
    <property type="match status" value="1"/>
</dbReference>
<dbReference type="Gene3D" id="3.30.572.10">
    <property type="entry name" value="Thymidylate synthase/dCMP hydroxymethylase domain"/>
    <property type="match status" value="1"/>
</dbReference>
<dbReference type="HAMAP" id="MF_00008">
    <property type="entry name" value="Thymidy_synth_bact"/>
    <property type="match status" value="1"/>
</dbReference>
<dbReference type="InterPro" id="IPR045097">
    <property type="entry name" value="Thymidate_synth/dCMP_Mease"/>
</dbReference>
<dbReference type="InterPro" id="IPR023451">
    <property type="entry name" value="Thymidate_synth/dCMP_Mease_dom"/>
</dbReference>
<dbReference type="InterPro" id="IPR036926">
    <property type="entry name" value="Thymidate_synth/dCMP_Mease_sf"/>
</dbReference>
<dbReference type="InterPro" id="IPR000398">
    <property type="entry name" value="Thymidylate_synthase"/>
</dbReference>
<dbReference type="InterPro" id="IPR020940">
    <property type="entry name" value="Thymidylate_synthase_AS"/>
</dbReference>
<dbReference type="NCBIfam" id="NF002498">
    <property type="entry name" value="PRK01827.1-4"/>
    <property type="match status" value="1"/>
</dbReference>
<dbReference type="NCBIfam" id="TIGR03284">
    <property type="entry name" value="thym_sym"/>
    <property type="match status" value="1"/>
</dbReference>
<dbReference type="PANTHER" id="PTHR11548:SF9">
    <property type="entry name" value="THYMIDYLATE SYNTHASE"/>
    <property type="match status" value="1"/>
</dbReference>
<dbReference type="PANTHER" id="PTHR11548">
    <property type="entry name" value="THYMIDYLATE SYNTHASE 1"/>
    <property type="match status" value="1"/>
</dbReference>
<dbReference type="Pfam" id="PF00303">
    <property type="entry name" value="Thymidylat_synt"/>
    <property type="match status" value="1"/>
</dbReference>
<dbReference type="PRINTS" id="PR00108">
    <property type="entry name" value="THYMDSNTHASE"/>
</dbReference>
<dbReference type="SUPFAM" id="SSF55831">
    <property type="entry name" value="Thymidylate synthase/dCMP hydroxymethylase"/>
    <property type="match status" value="1"/>
</dbReference>
<dbReference type="PROSITE" id="PS00091">
    <property type="entry name" value="THYMIDYLATE_SYNTHASE"/>
    <property type="match status" value="1"/>
</dbReference>
<protein>
    <recommendedName>
        <fullName evidence="1">Thymidylate synthase</fullName>
        <shortName evidence="1">TS</shortName>
        <shortName evidence="1">TSase</shortName>
        <ecNumber evidence="1">2.1.1.45</ecNumber>
    </recommendedName>
</protein>
<feature type="chain" id="PRO_0000141041" description="Thymidylate synthase">
    <location>
        <begin position="1"/>
        <end position="283"/>
    </location>
</feature>
<feature type="active site" description="Nucleophile" evidence="1">
    <location>
        <position position="160"/>
    </location>
</feature>
<feature type="binding site" evidence="1">
    <location>
        <position position="22"/>
    </location>
    <ligand>
        <name>dUMP</name>
        <dbReference type="ChEBI" id="CHEBI:246422"/>
    </ligand>
</feature>
<feature type="binding site" evidence="1">
    <location>
        <begin position="180"/>
        <end position="183"/>
    </location>
    <ligand>
        <name>dUMP</name>
        <dbReference type="ChEBI" id="CHEBI:246422"/>
    </ligand>
</feature>
<feature type="binding site" evidence="1">
    <location>
        <position position="183"/>
    </location>
    <ligand>
        <name>(6R)-5,10-methylene-5,6,7,8-tetrahydrofolate</name>
        <dbReference type="ChEBI" id="CHEBI:15636"/>
    </ligand>
</feature>
<feature type="binding site" evidence="1">
    <location>
        <position position="191"/>
    </location>
    <ligand>
        <name>dUMP</name>
        <dbReference type="ChEBI" id="CHEBI:246422"/>
    </ligand>
</feature>
<feature type="binding site" evidence="1">
    <location>
        <begin position="221"/>
        <end position="223"/>
    </location>
    <ligand>
        <name>dUMP</name>
        <dbReference type="ChEBI" id="CHEBI:246422"/>
    </ligand>
</feature>
<feature type="binding site" evidence="1">
    <location>
        <position position="282"/>
    </location>
    <ligand>
        <name>(6R)-5,10-methylene-5,6,7,8-tetrahydrofolate</name>
        <dbReference type="ChEBI" id="CHEBI:15636"/>
    </ligand>
</feature>
<name>TYSY_VIBPA</name>
<accession>Q87SA0</accession>
<sequence>MKQYLDLCQRIVDQGVWVENERTGKRCLTVINADLTYDVANNQFPLVTTRKSFWKAAVAELLGYIRGYDNAEDFRKLGTKTWDANANLNDAWLNNPYRKGEDDMGRVYGVQGRAWAKPDGGHIDQLRKIVDDLTRGVDDRGEILNFYNPGEFHMGCLRPCMYSHHFSLLDDTLYLNSTQRSCDVPLGLNFNMVQVYVFLAIMAQITGKKPGQAFHKIVNAHIYEDQLELMRDVQLKREPLQAPTFHINPEIKSLEDLETWVTLDDFWVEGYEHHDPIRYPFSV</sequence>
<reference key="1">
    <citation type="journal article" date="2003" name="Lancet">
        <title>Genome sequence of Vibrio parahaemolyticus: a pathogenic mechanism distinct from that of V. cholerae.</title>
        <authorList>
            <person name="Makino K."/>
            <person name="Oshima K."/>
            <person name="Kurokawa K."/>
            <person name="Yokoyama K."/>
            <person name="Uda T."/>
            <person name="Tagomori K."/>
            <person name="Iijima Y."/>
            <person name="Najima M."/>
            <person name="Nakano M."/>
            <person name="Yamashita A."/>
            <person name="Kubota Y."/>
            <person name="Kimura S."/>
            <person name="Yasunaga T."/>
            <person name="Honda T."/>
            <person name="Shinagawa H."/>
            <person name="Hattori M."/>
            <person name="Iida T."/>
        </authorList>
    </citation>
    <scope>NUCLEOTIDE SEQUENCE [LARGE SCALE GENOMIC DNA]</scope>
    <source>
        <strain>RIMD 2210633</strain>
    </source>
</reference>
<evidence type="ECO:0000255" key="1">
    <source>
        <dbReference type="HAMAP-Rule" id="MF_00008"/>
    </source>
</evidence>